<organism>
    <name type="scientific">Human papillomavirus type 48</name>
    <dbReference type="NCBI Taxonomy" id="40538"/>
    <lineage>
        <taxon>Viruses</taxon>
        <taxon>Monodnaviria</taxon>
        <taxon>Shotokuvirae</taxon>
        <taxon>Cossaviricota</taxon>
        <taxon>Papovaviricetes</taxon>
        <taxon>Zurhausenvirales</taxon>
        <taxon>Papillomaviridae</taxon>
        <taxon>Firstpapillomavirinae</taxon>
        <taxon>Gammapapillomavirus</taxon>
        <taxon>Gammapapillomavirus 2</taxon>
    </lineage>
</organism>
<sequence>MADHKGTDNIDHNDVLDGSWCLITEAECEDDTLVDLFEESTNDSVVSNLLDDSESIIQGNSEESDRCIQELKRKLNVTPEKQISELSPRLSAVHITPERASKRRLFNDSGVVEDEAESNTIQVDSLLVQKDAGNQNGAECELNSILRSNNIRATVLCKFKDKFGVSFNELTRSFKSDKTCTPNWVITAIGIREDLRDACKVLLQQHVEFLEMICNDFSVLLLVEFKVTKNRETVLKLMCSMLNAKEEQILCEPPKLKSTAAALYFYKKIITDTCFKYGTLPSWVSRLTIVEHQLASADTFSLSEMVQWAYDNDFTEEASVAYNYACYATENTNAAAFLASNMQVKYVKDCVAMVRMYKRQEMKSMTMSEWISKCCKEETIGEEWKEIVQFLKYQGVNFLEFLIALKQFFKCTPKKMCIVIYGPPDTGKSMFCFKLVQFLKGQVVSYINKSSQFWLMPLQDAKIGLLDDATHNCWIYLDTYLRNAFDGNTFCLDIKHKNLQQTKLPPMIITTNVNVTTDESLFYLRSRLTCFNFPNKLPMSDKDEPLFTISDKSWTCFFRKFWNQLELQEDAARDPGEPEHPFCCTARNSVDFD</sequence>
<keyword id="KW-0067">ATP-binding</keyword>
<keyword id="KW-0235">DNA replication</keyword>
<keyword id="KW-0238">DNA-binding</keyword>
<keyword id="KW-0244">Early protein</keyword>
<keyword id="KW-0347">Helicase</keyword>
<keyword id="KW-1048">Host nucleus</keyword>
<keyword id="KW-0378">Hydrolase</keyword>
<keyword id="KW-0413">Isomerase</keyword>
<keyword id="KW-1017">Isopeptide bond</keyword>
<keyword id="KW-0547">Nucleotide-binding</keyword>
<keyword id="KW-0597">Phosphoprotein</keyword>
<keyword id="KW-1185">Reference proteome</keyword>
<keyword id="KW-0832">Ubl conjugation</keyword>
<dbReference type="EC" id="5.6.2.4" evidence="1"/>
<dbReference type="EMBL" id="U31789">
    <property type="protein sequence ID" value="AAA79466.1"/>
    <property type="molecule type" value="Genomic_DNA"/>
</dbReference>
<dbReference type="RefSeq" id="NP_043418.1">
    <property type="nucleotide sequence ID" value="NC_001690.1"/>
</dbReference>
<dbReference type="SMR" id="Q80922"/>
<dbReference type="GeneID" id="1403623"/>
<dbReference type="KEGG" id="vg:1403623"/>
<dbReference type="OrthoDB" id="4795at10239"/>
<dbReference type="Proteomes" id="UP000112710">
    <property type="component" value="Genome"/>
</dbReference>
<dbReference type="GO" id="GO:0042025">
    <property type="term" value="C:host cell nucleus"/>
    <property type="evidence" value="ECO:0007669"/>
    <property type="project" value="UniProtKB-SubCell"/>
</dbReference>
<dbReference type="GO" id="GO:0005524">
    <property type="term" value="F:ATP binding"/>
    <property type="evidence" value="ECO:0007669"/>
    <property type="project" value="UniProtKB-UniRule"/>
</dbReference>
<dbReference type="GO" id="GO:0016887">
    <property type="term" value="F:ATP hydrolysis activity"/>
    <property type="evidence" value="ECO:0007669"/>
    <property type="project" value="RHEA"/>
</dbReference>
<dbReference type="GO" id="GO:0003677">
    <property type="term" value="F:DNA binding"/>
    <property type="evidence" value="ECO:0007669"/>
    <property type="project" value="UniProtKB-UniRule"/>
</dbReference>
<dbReference type="GO" id="GO:0003678">
    <property type="term" value="F:DNA helicase activity"/>
    <property type="evidence" value="ECO:0007669"/>
    <property type="project" value="UniProtKB-UniRule"/>
</dbReference>
<dbReference type="GO" id="GO:0006260">
    <property type="term" value="P:DNA replication"/>
    <property type="evidence" value="ECO:0007669"/>
    <property type="project" value="UniProtKB-UniRule"/>
</dbReference>
<dbReference type="Gene3D" id="3.40.1310.10">
    <property type="match status" value="1"/>
</dbReference>
<dbReference type="Gene3D" id="3.40.50.300">
    <property type="entry name" value="P-loop containing nucleotide triphosphate hydrolases"/>
    <property type="match status" value="1"/>
</dbReference>
<dbReference type="Gene3D" id="1.10.10.510">
    <property type="entry name" value="Zinc finger, large T-antigen D1 domain"/>
    <property type="match status" value="1"/>
</dbReference>
<dbReference type="HAMAP" id="MF_04000">
    <property type="entry name" value="PPV_E1"/>
    <property type="match status" value="1"/>
</dbReference>
<dbReference type="InterPro" id="IPR014015">
    <property type="entry name" value="Helicase_SF3_DNA-vir"/>
</dbReference>
<dbReference type="InterPro" id="IPR027417">
    <property type="entry name" value="P-loop_NTPase"/>
</dbReference>
<dbReference type="InterPro" id="IPR001177">
    <property type="entry name" value="PPV_DNA_helicase_E1_C"/>
</dbReference>
<dbReference type="InterPro" id="IPR014000">
    <property type="entry name" value="PPV_DNA_helicase_E1_N"/>
</dbReference>
<dbReference type="InterPro" id="IPR046832">
    <property type="entry name" value="PPV_E1_DBD"/>
</dbReference>
<dbReference type="InterPro" id="IPR046935">
    <property type="entry name" value="PPV_E1_DBD_sf"/>
</dbReference>
<dbReference type="InterPro" id="IPR016393">
    <property type="entry name" value="Rep_E1_papillomaV"/>
</dbReference>
<dbReference type="InterPro" id="IPR037102">
    <property type="entry name" value="Znf_lg_T-Ag_D1_dom_sf"/>
</dbReference>
<dbReference type="Pfam" id="PF00519">
    <property type="entry name" value="PPV_E1_C"/>
    <property type="match status" value="1"/>
</dbReference>
<dbReference type="Pfam" id="PF20450">
    <property type="entry name" value="PPV_E1_DBD"/>
    <property type="match status" value="1"/>
</dbReference>
<dbReference type="Pfam" id="PF00524">
    <property type="entry name" value="PPV_E1_N"/>
    <property type="match status" value="1"/>
</dbReference>
<dbReference type="PIRSF" id="PIRSF003383">
    <property type="entry name" value="Rep_E1_papillomaV"/>
    <property type="match status" value="1"/>
</dbReference>
<dbReference type="SUPFAM" id="SSF55464">
    <property type="entry name" value="Origin of replication-binding domain, RBD-like"/>
    <property type="match status" value="1"/>
</dbReference>
<dbReference type="SUPFAM" id="SSF52540">
    <property type="entry name" value="P-loop containing nucleoside triphosphate hydrolases"/>
    <property type="match status" value="1"/>
</dbReference>
<dbReference type="PROSITE" id="PS51206">
    <property type="entry name" value="SF3_HELICASE_1"/>
    <property type="match status" value="1"/>
</dbReference>
<comment type="function">
    <text evidence="1">ATP-dependent DNA 3'-5' helicase required for initiation of viral DNA replication. It forms a complex with the viral E2 protein. The E1-E2 complex binds to the replication origin which contains binding sites for both proteins. During the initial step, a dimer of E1 interacts with a dimer of protein E2 leading to a complex that binds the viral origin of replication with high specificity. Then, a second dimer of E1 displaces the E2 dimer in an ATP-dependent manner to form the E1 tetramer. Following this, two E1 monomers are added to each half of the site, which results in the formation of two E1 trimers on the viral ori. Subsequently, two hexamers will be created. The double hexamer acts as a bi-directional helicase machinery and unwinds the viral DNA and then recruits the host DNA polymerase to start replication.</text>
</comment>
<comment type="catalytic activity">
    <reaction evidence="1">
        <text>Couples ATP hydrolysis with the unwinding of duplex DNA by translocating in the 3'-5' direction.</text>
        <dbReference type="EC" id="5.6.2.4"/>
    </reaction>
</comment>
<comment type="catalytic activity">
    <reaction evidence="1">
        <text>ATP + H2O = ADP + phosphate + H(+)</text>
        <dbReference type="Rhea" id="RHEA:13065"/>
        <dbReference type="ChEBI" id="CHEBI:15377"/>
        <dbReference type="ChEBI" id="CHEBI:15378"/>
        <dbReference type="ChEBI" id="CHEBI:30616"/>
        <dbReference type="ChEBI" id="CHEBI:43474"/>
        <dbReference type="ChEBI" id="CHEBI:456216"/>
        <dbReference type="EC" id="5.6.2.4"/>
    </reaction>
</comment>
<comment type="subunit">
    <text evidence="1">Can form hexamers. Interacts with E2 protein; this interaction increases E1 DNA binding specificity. Interacts with host DNA polymerase subunit POLA2. Interacts with host single stranded DNA-binding protein RPA1. Interacts with host TOP1; this interaction stimulates the enzymatic activity of TOP1.</text>
</comment>
<comment type="subcellular location">
    <subcellularLocation>
        <location evidence="1">Host nucleus</location>
    </subcellularLocation>
</comment>
<comment type="PTM">
    <text evidence="1">Phosphorylated.</text>
</comment>
<comment type="PTM">
    <text evidence="1">Sumoylated.</text>
</comment>
<comment type="similarity">
    <text evidence="1">Belongs to the papillomaviridae E1 protein family.</text>
</comment>
<accession>Q80922</accession>
<organismHost>
    <name type="scientific">Homo sapiens</name>
    <name type="common">Human</name>
    <dbReference type="NCBI Taxonomy" id="9606"/>
</organismHost>
<reference key="1">
    <citation type="submission" date="1995-10" db="EMBL/GenBank/DDBJ databases">
        <authorList>
            <person name="Delius H."/>
        </authorList>
    </citation>
    <scope>NUCLEOTIDE SEQUENCE [GENOMIC DNA]</scope>
</reference>
<reference key="2">
    <citation type="journal article" date="1989" name="J. Virol.">
        <title>Human papillomavirus type 48.</title>
        <authorList>
            <person name="Mueller M."/>
            <person name="Kelly G."/>
            <person name="Fiedler M."/>
            <person name="Gissmann L."/>
        </authorList>
    </citation>
    <scope>NUCLEOTIDE SEQUENCE [GENOMIC DNA] OF 552-590</scope>
</reference>
<protein>
    <recommendedName>
        <fullName evidence="1">Replication protein E1</fullName>
        <ecNumber evidence="1">5.6.2.4</ecNumber>
    </recommendedName>
    <alternativeName>
        <fullName evidence="1">ATP-dependent helicase E1</fullName>
    </alternativeName>
    <alternativeName>
        <fullName evidence="1">DNA 3'-5' helicase E1</fullName>
    </alternativeName>
</protein>
<evidence type="ECO:0000255" key="1">
    <source>
        <dbReference type="HAMAP-Rule" id="MF_04000"/>
    </source>
</evidence>
<gene>
    <name evidence="1" type="primary">E1</name>
</gene>
<name>VE1_HPV48</name>
<proteinExistence type="inferred from homology"/>
<feature type="chain" id="PRO_0000133144" description="Replication protein E1">
    <location>
        <begin position="1"/>
        <end position="593"/>
    </location>
</feature>
<feature type="domain" description="SF3 helicase" evidence="1">
    <location>
        <begin position="382"/>
        <end position="546"/>
    </location>
</feature>
<feature type="region of interest" description="DNA-binding region" evidence="1">
    <location>
        <begin position="134"/>
        <end position="297"/>
    </location>
</feature>
<feature type="short sequence motif" description="Nuclear localization signal" evidence="1">
    <location>
        <begin position="72"/>
        <end position="74"/>
    </location>
</feature>
<feature type="short sequence motif" description="Nuclear export signal" evidence="1">
    <location>
        <begin position="86"/>
        <end position="95"/>
    </location>
</feature>
<feature type="binding site" evidence="1">
    <location>
        <begin position="422"/>
        <end position="429"/>
    </location>
    <ligand>
        <name>ATP</name>
        <dbReference type="ChEBI" id="CHEBI:30616"/>
    </ligand>
</feature>
<feature type="modified residue" description="Phosphoserine; by host" evidence="1">
    <location>
        <position position="87"/>
    </location>
</feature>
<feature type="cross-link" description="Glycyl lysine isopeptide (Lys-Gly) (interchain with G-Cter in SUMO)" evidence="1">
    <location>
        <position position="503"/>
    </location>
</feature>